<organism>
    <name type="scientific">Staphylococcus epidermidis (strain ATCC 35984 / DSM 28319 / BCRC 17069 / CCUG 31568 / BM 3577 / RP62A)</name>
    <dbReference type="NCBI Taxonomy" id="176279"/>
    <lineage>
        <taxon>Bacteria</taxon>
        <taxon>Bacillati</taxon>
        <taxon>Bacillota</taxon>
        <taxon>Bacilli</taxon>
        <taxon>Bacillales</taxon>
        <taxon>Staphylococcaceae</taxon>
        <taxon>Staphylococcus</taxon>
    </lineage>
</organism>
<accession>Q5HP71</accession>
<sequence length="332" mass="36119">MRKITVFGMGSFGTALANVLAQNGHDVLMWGKNVENVDELNTHHMNKNYLKDAKLDSSIKATVDLNKAVQFSDIYLMALPTKAIREVSKDIDQLLTSKKTFIHVAKGIENDTFKRVSEMIEDSISSEHNGGIGVLSGPSHAEEVVIKQPTTVAASSKDNNVSKLIQDLFMNDYLRVYTNNDLVGVELGGALKNIIAIASGIVAGMGYGDNAKAALMTRGLAEISRLGEKLGADPMTFLGLGGIGDLIVTCTSTHSRNYTLGFKLGQGKTAEEALKEMKMVVEGIYTTKSVYHLAQQEGVEMPITNALYEVLFEDVPVSKSVRTLMERDKKAE</sequence>
<reference key="1">
    <citation type="journal article" date="2005" name="J. Bacteriol.">
        <title>Insights on evolution of virulence and resistance from the complete genome analysis of an early methicillin-resistant Staphylococcus aureus strain and a biofilm-producing methicillin-resistant Staphylococcus epidermidis strain.</title>
        <authorList>
            <person name="Gill S.R."/>
            <person name="Fouts D.E."/>
            <person name="Archer G.L."/>
            <person name="Mongodin E.F."/>
            <person name="DeBoy R.T."/>
            <person name="Ravel J."/>
            <person name="Paulsen I.T."/>
            <person name="Kolonay J.F."/>
            <person name="Brinkac L.M."/>
            <person name="Beanan M.J."/>
            <person name="Dodson R.J."/>
            <person name="Daugherty S.C."/>
            <person name="Madupu R."/>
            <person name="Angiuoli S.V."/>
            <person name="Durkin A.S."/>
            <person name="Haft D.H."/>
            <person name="Vamathevan J.J."/>
            <person name="Khouri H."/>
            <person name="Utterback T.R."/>
            <person name="Lee C."/>
            <person name="Dimitrov G."/>
            <person name="Jiang L."/>
            <person name="Qin H."/>
            <person name="Weidman J."/>
            <person name="Tran K."/>
            <person name="Kang K.H."/>
            <person name="Hance I.R."/>
            <person name="Nelson K.E."/>
            <person name="Fraser C.M."/>
        </authorList>
    </citation>
    <scope>NUCLEOTIDE SEQUENCE [LARGE SCALE GENOMIC DNA]</scope>
    <source>
        <strain>ATCC 35984 / DSM 28319 / BCRC 17069 / CCUG 31568 / BM 3577 / RP62A</strain>
    </source>
</reference>
<protein>
    <recommendedName>
        <fullName evidence="1">Glycerol-3-phosphate dehydrogenase [NAD(P)+]</fullName>
        <ecNumber evidence="1">1.1.1.94</ecNumber>
    </recommendedName>
    <alternativeName>
        <fullName evidence="1">NAD(P)(+)-dependent glycerol-3-phosphate dehydrogenase</fullName>
    </alternativeName>
    <alternativeName>
        <fullName evidence="1">NAD(P)H-dependent dihydroxyacetone-phosphate reductase</fullName>
    </alternativeName>
</protein>
<gene>
    <name evidence="1" type="primary">gpsA</name>
    <name type="ordered locus">SERP1042</name>
</gene>
<proteinExistence type="inferred from homology"/>
<evidence type="ECO:0000255" key="1">
    <source>
        <dbReference type="HAMAP-Rule" id="MF_00394"/>
    </source>
</evidence>
<feature type="chain" id="PRO_0000138030" description="Glycerol-3-phosphate dehydrogenase [NAD(P)+]">
    <location>
        <begin position="1"/>
        <end position="332"/>
    </location>
</feature>
<feature type="active site" description="Proton acceptor" evidence="1">
    <location>
        <position position="192"/>
    </location>
</feature>
<feature type="binding site" evidence="1">
    <location>
        <position position="11"/>
    </location>
    <ligand>
        <name>NADPH</name>
        <dbReference type="ChEBI" id="CHEBI:57783"/>
    </ligand>
</feature>
<feature type="binding site" evidence="1">
    <location>
        <position position="12"/>
    </location>
    <ligand>
        <name>NADPH</name>
        <dbReference type="ChEBI" id="CHEBI:57783"/>
    </ligand>
</feature>
<feature type="binding site" evidence="1">
    <location>
        <position position="32"/>
    </location>
    <ligand>
        <name>NADPH</name>
        <dbReference type="ChEBI" id="CHEBI:57783"/>
    </ligand>
</feature>
<feature type="binding site" evidence="1">
    <location>
        <position position="106"/>
    </location>
    <ligand>
        <name>NADPH</name>
        <dbReference type="ChEBI" id="CHEBI:57783"/>
    </ligand>
</feature>
<feature type="binding site" evidence="1">
    <location>
        <position position="106"/>
    </location>
    <ligand>
        <name>sn-glycerol 3-phosphate</name>
        <dbReference type="ChEBI" id="CHEBI:57597"/>
    </ligand>
</feature>
<feature type="binding site" evidence="1">
    <location>
        <position position="137"/>
    </location>
    <ligand>
        <name>sn-glycerol 3-phosphate</name>
        <dbReference type="ChEBI" id="CHEBI:57597"/>
    </ligand>
</feature>
<feature type="binding site" evidence="1">
    <location>
        <position position="139"/>
    </location>
    <ligand>
        <name>sn-glycerol 3-phosphate</name>
        <dbReference type="ChEBI" id="CHEBI:57597"/>
    </ligand>
</feature>
<feature type="binding site" evidence="1">
    <location>
        <position position="141"/>
    </location>
    <ligand>
        <name>NADPH</name>
        <dbReference type="ChEBI" id="CHEBI:57783"/>
    </ligand>
</feature>
<feature type="binding site" evidence="1">
    <location>
        <position position="192"/>
    </location>
    <ligand>
        <name>sn-glycerol 3-phosphate</name>
        <dbReference type="ChEBI" id="CHEBI:57597"/>
    </ligand>
</feature>
<feature type="binding site" evidence="1">
    <location>
        <position position="245"/>
    </location>
    <ligand>
        <name>sn-glycerol 3-phosphate</name>
        <dbReference type="ChEBI" id="CHEBI:57597"/>
    </ligand>
</feature>
<feature type="binding site" evidence="1">
    <location>
        <position position="255"/>
    </location>
    <ligand>
        <name>sn-glycerol 3-phosphate</name>
        <dbReference type="ChEBI" id="CHEBI:57597"/>
    </ligand>
</feature>
<feature type="binding site" evidence="1">
    <location>
        <position position="256"/>
    </location>
    <ligand>
        <name>NADPH</name>
        <dbReference type="ChEBI" id="CHEBI:57783"/>
    </ligand>
</feature>
<feature type="binding site" evidence="1">
    <location>
        <position position="256"/>
    </location>
    <ligand>
        <name>sn-glycerol 3-phosphate</name>
        <dbReference type="ChEBI" id="CHEBI:57597"/>
    </ligand>
</feature>
<feature type="binding site" evidence="1">
    <location>
        <position position="257"/>
    </location>
    <ligand>
        <name>sn-glycerol 3-phosphate</name>
        <dbReference type="ChEBI" id="CHEBI:57597"/>
    </ligand>
</feature>
<feature type="binding site" evidence="1">
    <location>
        <position position="280"/>
    </location>
    <ligand>
        <name>NADPH</name>
        <dbReference type="ChEBI" id="CHEBI:57783"/>
    </ligand>
</feature>
<feature type="binding site" evidence="1">
    <location>
        <position position="282"/>
    </location>
    <ligand>
        <name>NADPH</name>
        <dbReference type="ChEBI" id="CHEBI:57783"/>
    </ligand>
</feature>
<keyword id="KW-0963">Cytoplasm</keyword>
<keyword id="KW-0444">Lipid biosynthesis</keyword>
<keyword id="KW-0443">Lipid metabolism</keyword>
<keyword id="KW-0520">NAD</keyword>
<keyword id="KW-0521">NADP</keyword>
<keyword id="KW-0547">Nucleotide-binding</keyword>
<keyword id="KW-0560">Oxidoreductase</keyword>
<keyword id="KW-0594">Phospholipid biosynthesis</keyword>
<keyword id="KW-1208">Phospholipid metabolism</keyword>
<keyword id="KW-1185">Reference proteome</keyword>
<comment type="function">
    <text evidence="1">Catalyzes the reduction of the glycolytic intermediate dihydroxyacetone phosphate (DHAP) to sn-glycerol 3-phosphate (G3P), the key precursor for phospholipid synthesis.</text>
</comment>
<comment type="catalytic activity">
    <reaction evidence="1">
        <text>sn-glycerol 3-phosphate + NAD(+) = dihydroxyacetone phosphate + NADH + H(+)</text>
        <dbReference type="Rhea" id="RHEA:11092"/>
        <dbReference type="ChEBI" id="CHEBI:15378"/>
        <dbReference type="ChEBI" id="CHEBI:57540"/>
        <dbReference type="ChEBI" id="CHEBI:57597"/>
        <dbReference type="ChEBI" id="CHEBI:57642"/>
        <dbReference type="ChEBI" id="CHEBI:57945"/>
        <dbReference type="EC" id="1.1.1.94"/>
    </reaction>
    <physiologicalReaction direction="right-to-left" evidence="1">
        <dbReference type="Rhea" id="RHEA:11094"/>
    </physiologicalReaction>
</comment>
<comment type="catalytic activity">
    <reaction evidence="1">
        <text>sn-glycerol 3-phosphate + NADP(+) = dihydroxyacetone phosphate + NADPH + H(+)</text>
        <dbReference type="Rhea" id="RHEA:11096"/>
        <dbReference type="ChEBI" id="CHEBI:15378"/>
        <dbReference type="ChEBI" id="CHEBI:57597"/>
        <dbReference type="ChEBI" id="CHEBI:57642"/>
        <dbReference type="ChEBI" id="CHEBI:57783"/>
        <dbReference type="ChEBI" id="CHEBI:58349"/>
        <dbReference type="EC" id="1.1.1.94"/>
    </reaction>
    <physiologicalReaction direction="right-to-left" evidence="1">
        <dbReference type="Rhea" id="RHEA:11098"/>
    </physiologicalReaction>
</comment>
<comment type="pathway">
    <text evidence="1">Membrane lipid metabolism; glycerophospholipid metabolism.</text>
</comment>
<comment type="subcellular location">
    <subcellularLocation>
        <location evidence="1">Cytoplasm</location>
    </subcellularLocation>
</comment>
<comment type="similarity">
    <text evidence="1">Belongs to the NAD-dependent glycerol-3-phosphate dehydrogenase family.</text>
</comment>
<name>GPDA_STAEQ</name>
<dbReference type="EC" id="1.1.1.94" evidence="1"/>
<dbReference type="EMBL" id="CP000029">
    <property type="protein sequence ID" value="AAW54433.1"/>
    <property type="molecule type" value="Genomic_DNA"/>
</dbReference>
<dbReference type="RefSeq" id="WP_001831154.1">
    <property type="nucleotide sequence ID" value="NC_002976.3"/>
</dbReference>
<dbReference type="SMR" id="Q5HP71"/>
<dbReference type="STRING" id="176279.SERP1042"/>
<dbReference type="KEGG" id="ser:SERP1042"/>
<dbReference type="eggNOG" id="COG0240">
    <property type="taxonomic scope" value="Bacteria"/>
</dbReference>
<dbReference type="HOGENOM" id="CLU_033449_0_2_9"/>
<dbReference type="UniPathway" id="UPA00940"/>
<dbReference type="Proteomes" id="UP000000531">
    <property type="component" value="Chromosome"/>
</dbReference>
<dbReference type="GO" id="GO:0005829">
    <property type="term" value="C:cytosol"/>
    <property type="evidence" value="ECO:0007669"/>
    <property type="project" value="TreeGrafter"/>
</dbReference>
<dbReference type="GO" id="GO:0047952">
    <property type="term" value="F:glycerol-3-phosphate dehydrogenase [NAD(P)+] activity"/>
    <property type="evidence" value="ECO:0007669"/>
    <property type="project" value="UniProtKB-UniRule"/>
</dbReference>
<dbReference type="GO" id="GO:0051287">
    <property type="term" value="F:NAD binding"/>
    <property type="evidence" value="ECO:0007669"/>
    <property type="project" value="InterPro"/>
</dbReference>
<dbReference type="GO" id="GO:0005975">
    <property type="term" value="P:carbohydrate metabolic process"/>
    <property type="evidence" value="ECO:0007669"/>
    <property type="project" value="InterPro"/>
</dbReference>
<dbReference type="GO" id="GO:0046167">
    <property type="term" value="P:glycerol-3-phosphate biosynthetic process"/>
    <property type="evidence" value="ECO:0007669"/>
    <property type="project" value="UniProtKB-UniRule"/>
</dbReference>
<dbReference type="GO" id="GO:0046168">
    <property type="term" value="P:glycerol-3-phosphate catabolic process"/>
    <property type="evidence" value="ECO:0007669"/>
    <property type="project" value="InterPro"/>
</dbReference>
<dbReference type="GO" id="GO:0006650">
    <property type="term" value="P:glycerophospholipid metabolic process"/>
    <property type="evidence" value="ECO:0007669"/>
    <property type="project" value="UniProtKB-UniRule"/>
</dbReference>
<dbReference type="GO" id="GO:0008654">
    <property type="term" value="P:phospholipid biosynthetic process"/>
    <property type="evidence" value="ECO:0007669"/>
    <property type="project" value="UniProtKB-KW"/>
</dbReference>
<dbReference type="FunFam" id="1.10.1040.10:FF:000001">
    <property type="entry name" value="Glycerol-3-phosphate dehydrogenase [NAD(P)+]"/>
    <property type="match status" value="1"/>
</dbReference>
<dbReference type="FunFam" id="3.40.50.720:FF:000019">
    <property type="entry name" value="Glycerol-3-phosphate dehydrogenase [NAD(P)+]"/>
    <property type="match status" value="1"/>
</dbReference>
<dbReference type="Gene3D" id="1.10.1040.10">
    <property type="entry name" value="N-(1-d-carboxylethyl)-l-norvaline Dehydrogenase, domain 2"/>
    <property type="match status" value="1"/>
</dbReference>
<dbReference type="Gene3D" id="3.40.50.720">
    <property type="entry name" value="NAD(P)-binding Rossmann-like Domain"/>
    <property type="match status" value="1"/>
</dbReference>
<dbReference type="HAMAP" id="MF_00394">
    <property type="entry name" value="NAD_Glyc3P_dehydrog"/>
    <property type="match status" value="1"/>
</dbReference>
<dbReference type="InterPro" id="IPR008927">
    <property type="entry name" value="6-PGluconate_DH-like_C_sf"/>
</dbReference>
<dbReference type="InterPro" id="IPR013328">
    <property type="entry name" value="6PGD_dom2"/>
</dbReference>
<dbReference type="InterPro" id="IPR006168">
    <property type="entry name" value="G3P_DH_NAD-dep"/>
</dbReference>
<dbReference type="InterPro" id="IPR006109">
    <property type="entry name" value="G3P_DH_NAD-dep_C"/>
</dbReference>
<dbReference type="InterPro" id="IPR011128">
    <property type="entry name" value="G3P_DH_NAD-dep_N"/>
</dbReference>
<dbReference type="InterPro" id="IPR036291">
    <property type="entry name" value="NAD(P)-bd_dom_sf"/>
</dbReference>
<dbReference type="NCBIfam" id="NF000940">
    <property type="entry name" value="PRK00094.1-2"/>
    <property type="match status" value="1"/>
</dbReference>
<dbReference type="NCBIfam" id="NF000941">
    <property type="entry name" value="PRK00094.1-3"/>
    <property type="match status" value="1"/>
</dbReference>
<dbReference type="NCBIfam" id="NF000942">
    <property type="entry name" value="PRK00094.1-4"/>
    <property type="match status" value="1"/>
</dbReference>
<dbReference type="PANTHER" id="PTHR11728">
    <property type="entry name" value="GLYCEROL-3-PHOSPHATE DEHYDROGENASE"/>
    <property type="match status" value="1"/>
</dbReference>
<dbReference type="PANTHER" id="PTHR11728:SF1">
    <property type="entry name" value="GLYCEROL-3-PHOSPHATE DEHYDROGENASE [NAD(+)] 2, CHLOROPLASTIC"/>
    <property type="match status" value="1"/>
</dbReference>
<dbReference type="Pfam" id="PF07479">
    <property type="entry name" value="NAD_Gly3P_dh_C"/>
    <property type="match status" value="1"/>
</dbReference>
<dbReference type="Pfam" id="PF01210">
    <property type="entry name" value="NAD_Gly3P_dh_N"/>
    <property type="match status" value="1"/>
</dbReference>
<dbReference type="PIRSF" id="PIRSF000114">
    <property type="entry name" value="Glycerol-3-P_dh"/>
    <property type="match status" value="1"/>
</dbReference>
<dbReference type="PRINTS" id="PR00077">
    <property type="entry name" value="GPDHDRGNASE"/>
</dbReference>
<dbReference type="SUPFAM" id="SSF48179">
    <property type="entry name" value="6-phosphogluconate dehydrogenase C-terminal domain-like"/>
    <property type="match status" value="1"/>
</dbReference>
<dbReference type="SUPFAM" id="SSF51735">
    <property type="entry name" value="NAD(P)-binding Rossmann-fold domains"/>
    <property type="match status" value="1"/>
</dbReference>
<dbReference type="PROSITE" id="PS00957">
    <property type="entry name" value="NAD_G3PDH"/>
    <property type="match status" value="1"/>
</dbReference>